<evidence type="ECO:0000250" key="1"/>
<evidence type="ECO:0000256" key="2">
    <source>
        <dbReference type="SAM" id="MobiDB-lite"/>
    </source>
</evidence>
<evidence type="ECO:0000305" key="3"/>
<gene>
    <name type="primary">slu7</name>
    <name type="synonym">sluA</name>
    <name type="ORF">AN4788</name>
</gene>
<name>SLU7_EMENI</name>
<reference key="1">
    <citation type="submission" date="2005-08" db="EMBL/GenBank/DDBJ databases">
        <title>Mutagen-inducible bidirectional uvsI promoter regulates both of the uvsI and sluA gene expression in Aspergillus nidulans.</title>
        <authorList>
            <person name="Cha M.-J."/>
            <person name="Han K.-Y."/>
            <person name="Kwon N.-J."/>
            <person name="Han K.-H."/>
            <person name="Han D.-M."/>
            <person name="Chae S.-K."/>
        </authorList>
    </citation>
    <scope>NUCLEOTIDE SEQUENCE [GENOMIC DNA]</scope>
</reference>
<reference key="2">
    <citation type="journal article" date="2005" name="Nature">
        <title>Sequencing of Aspergillus nidulans and comparative analysis with A. fumigatus and A. oryzae.</title>
        <authorList>
            <person name="Galagan J.E."/>
            <person name="Calvo S.E."/>
            <person name="Cuomo C."/>
            <person name="Ma L.-J."/>
            <person name="Wortman J.R."/>
            <person name="Batzoglou S."/>
            <person name="Lee S.-I."/>
            <person name="Bastuerkmen M."/>
            <person name="Spevak C.C."/>
            <person name="Clutterbuck J."/>
            <person name="Kapitonov V."/>
            <person name="Jurka J."/>
            <person name="Scazzocchio C."/>
            <person name="Farman M.L."/>
            <person name="Butler J."/>
            <person name="Purcell S."/>
            <person name="Harris S."/>
            <person name="Braus G.H."/>
            <person name="Draht O."/>
            <person name="Busch S."/>
            <person name="D'Enfert C."/>
            <person name="Bouchier C."/>
            <person name="Goldman G.H."/>
            <person name="Bell-Pedersen D."/>
            <person name="Griffiths-Jones S."/>
            <person name="Doonan J.H."/>
            <person name="Yu J."/>
            <person name="Vienken K."/>
            <person name="Pain A."/>
            <person name="Freitag M."/>
            <person name="Selker E.U."/>
            <person name="Archer D.B."/>
            <person name="Penalva M.A."/>
            <person name="Oakley B.R."/>
            <person name="Momany M."/>
            <person name="Tanaka T."/>
            <person name="Kumagai T."/>
            <person name="Asai K."/>
            <person name="Machida M."/>
            <person name="Nierman W.C."/>
            <person name="Denning D.W."/>
            <person name="Caddick M.X."/>
            <person name="Hynes M."/>
            <person name="Paoletti M."/>
            <person name="Fischer R."/>
            <person name="Miller B.L."/>
            <person name="Dyer P.S."/>
            <person name="Sachs M.S."/>
            <person name="Osmani S.A."/>
            <person name="Birren B.W."/>
        </authorList>
    </citation>
    <scope>NUCLEOTIDE SEQUENCE [LARGE SCALE GENOMIC DNA]</scope>
    <source>
        <strain>FGSC A4 / ATCC 38163 / CBS 112.46 / NRRL 194 / M139</strain>
    </source>
</reference>
<reference key="3">
    <citation type="journal article" date="2009" name="Fungal Genet. Biol.">
        <title>The 2008 update of the Aspergillus nidulans genome annotation: a community effort.</title>
        <authorList>
            <person name="Wortman J.R."/>
            <person name="Gilsenan J.M."/>
            <person name="Joardar V."/>
            <person name="Deegan J."/>
            <person name="Clutterbuck J."/>
            <person name="Andersen M.R."/>
            <person name="Archer D."/>
            <person name="Bencina M."/>
            <person name="Braus G."/>
            <person name="Coutinho P."/>
            <person name="von Dohren H."/>
            <person name="Doonan J."/>
            <person name="Driessen A.J."/>
            <person name="Durek P."/>
            <person name="Espeso E."/>
            <person name="Fekete E."/>
            <person name="Flipphi M."/>
            <person name="Estrada C.G."/>
            <person name="Geysens S."/>
            <person name="Goldman G."/>
            <person name="de Groot P.W."/>
            <person name="Hansen K."/>
            <person name="Harris S.D."/>
            <person name="Heinekamp T."/>
            <person name="Helmstaedt K."/>
            <person name="Henrissat B."/>
            <person name="Hofmann G."/>
            <person name="Homan T."/>
            <person name="Horio T."/>
            <person name="Horiuchi H."/>
            <person name="James S."/>
            <person name="Jones M."/>
            <person name="Karaffa L."/>
            <person name="Karanyi Z."/>
            <person name="Kato M."/>
            <person name="Keller N."/>
            <person name="Kelly D.E."/>
            <person name="Kiel J.A."/>
            <person name="Kim J.M."/>
            <person name="van der Klei I.J."/>
            <person name="Klis F.M."/>
            <person name="Kovalchuk A."/>
            <person name="Krasevec N."/>
            <person name="Kubicek C.P."/>
            <person name="Liu B."/>
            <person name="Maccabe A."/>
            <person name="Meyer V."/>
            <person name="Mirabito P."/>
            <person name="Miskei M."/>
            <person name="Mos M."/>
            <person name="Mullins J."/>
            <person name="Nelson D.R."/>
            <person name="Nielsen J."/>
            <person name="Oakley B.R."/>
            <person name="Osmani S.A."/>
            <person name="Pakula T."/>
            <person name="Paszewski A."/>
            <person name="Paulsen I."/>
            <person name="Pilsyk S."/>
            <person name="Pocsi I."/>
            <person name="Punt P.J."/>
            <person name="Ram A.F."/>
            <person name="Ren Q."/>
            <person name="Robellet X."/>
            <person name="Robson G."/>
            <person name="Seiboth B."/>
            <person name="van Solingen P."/>
            <person name="Specht T."/>
            <person name="Sun J."/>
            <person name="Taheri-Talesh N."/>
            <person name="Takeshita N."/>
            <person name="Ussery D."/>
            <person name="vanKuyk P.A."/>
            <person name="Visser H."/>
            <person name="van de Vondervoort P.J."/>
            <person name="de Vries R.P."/>
            <person name="Walton J."/>
            <person name="Xiang X."/>
            <person name="Xiong Y."/>
            <person name="Zeng A.P."/>
            <person name="Brandt B.W."/>
            <person name="Cornell M.J."/>
            <person name="van den Hondel C.A."/>
            <person name="Visser J."/>
            <person name="Oliver S.G."/>
            <person name="Turner G."/>
        </authorList>
    </citation>
    <scope>GENOME REANNOTATION</scope>
    <source>
        <strain>FGSC A4 / ATCC 38163 / CBS 112.46 / NRRL 194 / M139</strain>
    </source>
</reference>
<sequence length="466" mass="53359">MSRKPADVASKERNEYIPAFISKKPFYIDDDDTANDYLEHQRLHKQTTDQSKWYERGKRAGPAATKYRKGACENCGAMTHKAKECLSRPRKHGAKWTGKDIQADEVIQNVDLGWDAKRDRWNGYDAAEYRQVVEEYEELERLKRQAKLTKGETQTTNDGLDDEAPEQEARYAEESDMGRQQSTATRNLRIREDTAKYLLNLDLDSAKYDPKTRRMVDMGAAEDQAAALVAEENFVRSSGDAAEFERAQRYAWEAQERGTQKIHLQANPTSGEITRKKELAESEAKRDAHRKALLEKYGGEQHLKHTPLLETMVVENERFVEYDETGAIKGAPKKATKSKYPEDILTNNHKSVWGSWWHNFQWGYACCFSTVKNSYCTGEEGKRAFEEARNMLLLPGDETEQPSLAVESASRQEEPSAESHNQQRDSKKRTLMEVQSGITEEELESYKRSRLAADDPMAAFIEKDDS</sequence>
<accession>Q5B3U2</accession>
<accession>C8VAN0</accession>
<accession>Q3Y5U3</accession>
<keyword id="KW-0479">Metal-binding</keyword>
<keyword id="KW-0507">mRNA processing</keyword>
<keyword id="KW-0508">mRNA splicing</keyword>
<keyword id="KW-0539">Nucleus</keyword>
<keyword id="KW-1185">Reference proteome</keyword>
<keyword id="KW-0747">Spliceosome</keyword>
<keyword id="KW-0862">Zinc</keyword>
<keyword id="KW-0863">Zinc-finger</keyword>
<feature type="chain" id="PRO_0000218548" description="Pre-mRNA-splicing factor slu7">
    <location>
        <begin position="1"/>
        <end position="466"/>
    </location>
</feature>
<feature type="zinc finger region" description="CCHC-type">
    <location>
        <begin position="70"/>
        <end position="87"/>
    </location>
</feature>
<feature type="region of interest" description="Disordered" evidence="2">
    <location>
        <begin position="147"/>
        <end position="186"/>
    </location>
</feature>
<feature type="region of interest" description="Disordered" evidence="2">
    <location>
        <begin position="395"/>
        <end position="450"/>
    </location>
</feature>
<feature type="compositionally biased region" description="Basic and acidic residues" evidence="2">
    <location>
        <begin position="167"/>
        <end position="177"/>
    </location>
</feature>
<feature type="compositionally biased region" description="Basic and acidic residues" evidence="2">
    <location>
        <begin position="421"/>
        <end position="431"/>
    </location>
</feature>
<proteinExistence type="inferred from homology"/>
<dbReference type="EMBL" id="DQ157008">
    <property type="protein sequence ID" value="AAZ82408.1"/>
    <property type="molecule type" value="Genomic_DNA"/>
</dbReference>
<dbReference type="EMBL" id="AACD01000081">
    <property type="protein sequence ID" value="EAA60358.1"/>
    <property type="molecule type" value="Genomic_DNA"/>
</dbReference>
<dbReference type="EMBL" id="BN001303">
    <property type="protein sequence ID" value="CBF76780.1"/>
    <property type="molecule type" value="Genomic_DNA"/>
</dbReference>
<dbReference type="RefSeq" id="XP_662392.1">
    <property type="nucleotide sequence ID" value="XM_657300.1"/>
</dbReference>
<dbReference type="SMR" id="Q5B3U2"/>
<dbReference type="FunCoup" id="Q5B3U2">
    <property type="interactions" value="473"/>
</dbReference>
<dbReference type="STRING" id="227321.Q5B3U2"/>
<dbReference type="EnsemblFungi" id="CBF76780">
    <property type="protein sequence ID" value="CBF76780"/>
    <property type="gene ID" value="ANIA_04788"/>
</dbReference>
<dbReference type="KEGG" id="ani:ANIA_04788"/>
<dbReference type="VEuPathDB" id="FungiDB:AN4788"/>
<dbReference type="eggNOG" id="KOG2560">
    <property type="taxonomic scope" value="Eukaryota"/>
</dbReference>
<dbReference type="HOGENOM" id="CLU_019317_3_1_1"/>
<dbReference type="InParanoid" id="Q5B3U2"/>
<dbReference type="OMA" id="KYAWESQ"/>
<dbReference type="OrthoDB" id="249612at2759"/>
<dbReference type="Proteomes" id="UP000000560">
    <property type="component" value="Chromosome III"/>
</dbReference>
<dbReference type="GO" id="GO:0005681">
    <property type="term" value="C:spliceosomal complex"/>
    <property type="evidence" value="ECO:0000318"/>
    <property type="project" value="GO_Central"/>
</dbReference>
<dbReference type="GO" id="GO:0030628">
    <property type="term" value="F:pre-mRNA 3'-splice site binding"/>
    <property type="evidence" value="ECO:0007669"/>
    <property type="project" value="InterPro"/>
</dbReference>
<dbReference type="GO" id="GO:0008270">
    <property type="term" value="F:zinc ion binding"/>
    <property type="evidence" value="ECO:0007669"/>
    <property type="project" value="UniProtKB-KW"/>
</dbReference>
<dbReference type="GO" id="GO:0000398">
    <property type="term" value="P:mRNA splicing, via spliceosome"/>
    <property type="evidence" value="ECO:0007669"/>
    <property type="project" value="InterPro"/>
</dbReference>
<dbReference type="GO" id="GO:0008380">
    <property type="term" value="P:RNA splicing"/>
    <property type="evidence" value="ECO:0000318"/>
    <property type="project" value="GO_Central"/>
</dbReference>
<dbReference type="InterPro" id="IPR021715">
    <property type="entry name" value="Slu7_dom"/>
</dbReference>
<dbReference type="InterPro" id="IPR039974">
    <property type="entry name" value="Splicing_factor_SLU7"/>
</dbReference>
<dbReference type="PANTHER" id="PTHR12942:SF2">
    <property type="entry name" value="PRE-MRNA-SPLICING FACTOR SLU7"/>
    <property type="match status" value="1"/>
</dbReference>
<dbReference type="PANTHER" id="PTHR12942">
    <property type="entry name" value="STEP II SPLICING FACTOR SLU7"/>
    <property type="match status" value="1"/>
</dbReference>
<dbReference type="Pfam" id="PF11708">
    <property type="entry name" value="Slu7"/>
    <property type="match status" value="1"/>
</dbReference>
<organism>
    <name type="scientific">Emericella nidulans (strain FGSC A4 / ATCC 38163 / CBS 112.46 / NRRL 194 / M139)</name>
    <name type="common">Aspergillus nidulans</name>
    <dbReference type="NCBI Taxonomy" id="227321"/>
    <lineage>
        <taxon>Eukaryota</taxon>
        <taxon>Fungi</taxon>
        <taxon>Dikarya</taxon>
        <taxon>Ascomycota</taxon>
        <taxon>Pezizomycotina</taxon>
        <taxon>Eurotiomycetes</taxon>
        <taxon>Eurotiomycetidae</taxon>
        <taxon>Eurotiales</taxon>
        <taxon>Aspergillaceae</taxon>
        <taxon>Aspergillus</taxon>
        <taxon>Aspergillus subgen. Nidulantes</taxon>
    </lineage>
</organism>
<comment type="function">
    <text evidence="1">Involved in pre-mRNA splicing.</text>
</comment>
<comment type="subunit">
    <text evidence="1">Associated with the spliceosome.</text>
</comment>
<comment type="subcellular location">
    <subcellularLocation>
        <location evidence="1">Nucleus</location>
    </subcellularLocation>
</comment>
<comment type="similarity">
    <text evidence="3">Belongs to the SLU7 family.</text>
</comment>
<protein>
    <recommendedName>
        <fullName>Pre-mRNA-splicing factor slu7</fullName>
    </recommendedName>
    <alternativeName>
        <fullName>Splicing factor sluA</fullName>
    </alternativeName>
</protein>